<comment type="function">
    <text evidence="1">DEAD-box RNA helicase involved in RNA degradation. Has RNA-dependent ATPase activity and unwinds double-stranded RNA.</text>
</comment>
<comment type="catalytic activity">
    <reaction evidence="1">
        <text>ATP + H2O = ADP + phosphate + H(+)</text>
        <dbReference type="Rhea" id="RHEA:13065"/>
        <dbReference type="ChEBI" id="CHEBI:15377"/>
        <dbReference type="ChEBI" id="CHEBI:15378"/>
        <dbReference type="ChEBI" id="CHEBI:30616"/>
        <dbReference type="ChEBI" id="CHEBI:43474"/>
        <dbReference type="ChEBI" id="CHEBI:456216"/>
        <dbReference type="EC" id="3.6.4.13"/>
    </reaction>
</comment>
<comment type="subunit">
    <text evidence="1">Component of the RNA degradosome, which is a multiprotein complex involved in RNA processing and mRNA degradation.</text>
</comment>
<comment type="subcellular location">
    <subcellularLocation>
        <location evidence="1">Cytoplasm</location>
    </subcellularLocation>
</comment>
<comment type="similarity">
    <text evidence="1">Belongs to the DEAD box helicase family. RhlB subfamily.</text>
</comment>
<evidence type="ECO:0000255" key="1">
    <source>
        <dbReference type="HAMAP-Rule" id="MF_00661"/>
    </source>
</evidence>
<evidence type="ECO:0000256" key="2">
    <source>
        <dbReference type="SAM" id="MobiDB-lite"/>
    </source>
</evidence>
<sequence length="421" mass="47126">MSKTHLTEQKFSDFALHPKVVEALEKKGFHNCTPIQALALPLTLAGRDVAGQAQTGTGKTMAFLTSTFHYLLSHPAIADRKVNQPRALIMAPTRELAVQIHADAEPLAEATGLKLGLAYGGDGYDKQLKVLESGVDILIGTTGRLIDYAKQNHINLGAIQVVVLDEADRMYDLGFIKDIRWLFRRMPPANQRLNMLFSATLSYRVRELAFEQMNNAEYIEVEPEQKTGHRIKEELFYPSNEEKMRLLQTLIEEEWPDRAIIFANTKHRCEEIWGHLAADGHRVGLLTGDVAQKKRLRILDEFTRGDLDILVATDVAARGLHIPAVTHVFNYDLPDDCEDYVHRIGRTGRAGASGHSISLACEEYALNLPAIETYIGHSIPVSKYNPDALMTDLPKPLRLTRPRTGNGPRRTGAPRNRRRSG</sequence>
<feature type="chain" id="PRO_1000082840" description="ATP-dependent RNA helicase RhlB">
    <location>
        <begin position="1"/>
        <end position="421"/>
    </location>
</feature>
<feature type="domain" description="Helicase ATP-binding" evidence="1">
    <location>
        <begin position="40"/>
        <end position="219"/>
    </location>
</feature>
<feature type="domain" description="Helicase C-terminal" evidence="1">
    <location>
        <begin position="245"/>
        <end position="390"/>
    </location>
</feature>
<feature type="region of interest" description="Disordered" evidence="2">
    <location>
        <begin position="392"/>
        <end position="421"/>
    </location>
</feature>
<feature type="short sequence motif" description="Q motif">
    <location>
        <begin position="9"/>
        <end position="37"/>
    </location>
</feature>
<feature type="short sequence motif" description="DEAD box">
    <location>
        <begin position="165"/>
        <end position="168"/>
    </location>
</feature>
<feature type="compositionally biased region" description="Low complexity" evidence="2">
    <location>
        <begin position="402"/>
        <end position="414"/>
    </location>
</feature>
<feature type="binding site" evidence="1">
    <location>
        <begin position="53"/>
        <end position="60"/>
    </location>
    <ligand>
        <name>ATP</name>
        <dbReference type="ChEBI" id="CHEBI:30616"/>
    </ligand>
</feature>
<reference key="1">
    <citation type="journal article" date="2006" name="Mol. Microbiol.">
        <title>Role of pathogenicity island-associated integrases in the genome plasticity of uropathogenic Escherichia coli strain 536.</title>
        <authorList>
            <person name="Hochhut B."/>
            <person name="Wilde C."/>
            <person name="Balling G."/>
            <person name="Middendorf B."/>
            <person name="Dobrindt U."/>
            <person name="Brzuszkiewicz E."/>
            <person name="Gottschalk G."/>
            <person name="Carniel E."/>
            <person name="Hacker J."/>
        </authorList>
    </citation>
    <scope>NUCLEOTIDE SEQUENCE [LARGE SCALE GENOMIC DNA]</scope>
    <source>
        <strain>536 / UPEC</strain>
    </source>
</reference>
<organism>
    <name type="scientific">Escherichia coli O6:K15:H31 (strain 536 / UPEC)</name>
    <dbReference type="NCBI Taxonomy" id="362663"/>
    <lineage>
        <taxon>Bacteria</taxon>
        <taxon>Pseudomonadati</taxon>
        <taxon>Pseudomonadota</taxon>
        <taxon>Gammaproteobacteria</taxon>
        <taxon>Enterobacterales</taxon>
        <taxon>Enterobacteriaceae</taxon>
        <taxon>Escherichia</taxon>
    </lineage>
</organism>
<dbReference type="EC" id="3.6.4.13" evidence="1"/>
<dbReference type="EMBL" id="CP000247">
    <property type="protein sequence ID" value="ABG71936.1"/>
    <property type="molecule type" value="Genomic_DNA"/>
</dbReference>
<dbReference type="RefSeq" id="WP_000047499.1">
    <property type="nucleotide sequence ID" value="NC_008253.1"/>
</dbReference>
<dbReference type="SMR" id="Q0TAU3"/>
<dbReference type="GeneID" id="93778164"/>
<dbReference type="KEGG" id="ecp:ECP_3972"/>
<dbReference type="HOGENOM" id="CLU_003041_1_3_6"/>
<dbReference type="Proteomes" id="UP000009182">
    <property type="component" value="Chromosome"/>
</dbReference>
<dbReference type="GO" id="GO:0005829">
    <property type="term" value="C:cytosol"/>
    <property type="evidence" value="ECO:0007669"/>
    <property type="project" value="TreeGrafter"/>
</dbReference>
<dbReference type="GO" id="GO:0005524">
    <property type="term" value="F:ATP binding"/>
    <property type="evidence" value="ECO:0007669"/>
    <property type="project" value="UniProtKB-UniRule"/>
</dbReference>
<dbReference type="GO" id="GO:0016887">
    <property type="term" value="F:ATP hydrolysis activity"/>
    <property type="evidence" value="ECO:0007669"/>
    <property type="project" value="RHEA"/>
</dbReference>
<dbReference type="GO" id="GO:0003723">
    <property type="term" value="F:RNA binding"/>
    <property type="evidence" value="ECO:0007669"/>
    <property type="project" value="UniProtKB-UniRule"/>
</dbReference>
<dbReference type="GO" id="GO:0003724">
    <property type="term" value="F:RNA helicase activity"/>
    <property type="evidence" value="ECO:0007669"/>
    <property type="project" value="UniProtKB-UniRule"/>
</dbReference>
<dbReference type="GO" id="GO:0006401">
    <property type="term" value="P:RNA catabolic process"/>
    <property type="evidence" value="ECO:0007669"/>
    <property type="project" value="UniProtKB-UniRule"/>
</dbReference>
<dbReference type="CDD" id="cd00268">
    <property type="entry name" value="DEADc"/>
    <property type="match status" value="1"/>
</dbReference>
<dbReference type="CDD" id="cd18787">
    <property type="entry name" value="SF2_C_DEAD"/>
    <property type="match status" value="1"/>
</dbReference>
<dbReference type="FunFam" id="3.40.50.300:FF:000008">
    <property type="entry name" value="ATP-dependent RNA helicase RhlB"/>
    <property type="match status" value="1"/>
</dbReference>
<dbReference type="FunFam" id="3.40.50.300:FF:000312">
    <property type="entry name" value="ATP-dependent RNA helicase RhlB"/>
    <property type="match status" value="1"/>
</dbReference>
<dbReference type="Gene3D" id="3.40.50.300">
    <property type="entry name" value="P-loop containing nucleotide triphosphate hydrolases"/>
    <property type="match status" value="2"/>
</dbReference>
<dbReference type="HAMAP" id="MF_00661">
    <property type="entry name" value="DEAD_helicase_RhlB"/>
    <property type="match status" value="1"/>
</dbReference>
<dbReference type="InterPro" id="IPR011545">
    <property type="entry name" value="DEAD/DEAH_box_helicase_dom"/>
</dbReference>
<dbReference type="InterPro" id="IPR050079">
    <property type="entry name" value="DEAD_box_RNA_helicase"/>
</dbReference>
<dbReference type="InterPro" id="IPR014001">
    <property type="entry name" value="Helicase_ATP-bd"/>
</dbReference>
<dbReference type="InterPro" id="IPR001650">
    <property type="entry name" value="Helicase_C-like"/>
</dbReference>
<dbReference type="InterPro" id="IPR027417">
    <property type="entry name" value="P-loop_NTPase"/>
</dbReference>
<dbReference type="InterPro" id="IPR000629">
    <property type="entry name" value="RNA-helicase_DEAD-box_CS"/>
</dbReference>
<dbReference type="InterPro" id="IPR023554">
    <property type="entry name" value="RNA_helicase_ATP-dep_RhlB"/>
</dbReference>
<dbReference type="InterPro" id="IPR014014">
    <property type="entry name" value="RNA_helicase_DEAD_Q_motif"/>
</dbReference>
<dbReference type="NCBIfam" id="NF003419">
    <property type="entry name" value="PRK04837.1"/>
    <property type="match status" value="1"/>
</dbReference>
<dbReference type="PANTHER" id="PTHR47959:SF10">
    <property type="entry name" value="ATP-DEPENDENT RNA HELICASE RHLB"/>
    <property type="match status" value="1"/>
</dbReference>
<dbReference type="PANTHER" id="PTHR47959">
    <property type="entry name" value="ATP-DEPENDENT RNA HELICASE RHLE-RELATED"/>
    <property type="match status" value="1"/>
</dbReference>
<dbReference type="Pfam" id="PF00270">
    <property type="entry name" value="DEAD"/>
    <property type="match status" value="1"/>
</dbReference>
<dbReference type="Pfam" id="PF00271">
    <property type="entry name" value="Helicase_C"/>
    <property type="match status" value="1"/>
</dbReference>
<dbReference type="SMART" id="SM00487">
    <property type="entry name" value="DEXDc"/>
    <property type="match status" value="1"/>
</dbReference>
<dbReference type="SMART" id="SM00490">
    <property type="entry name" value="HELICc"/>
    <property type="match status" value="1"/>
</dbReference>
<dbReference type="SUPFAM" id="SSF52540">
    <property type="entry name" value="P-loop containing nucleoside triphosphate hydrolases"/>
    <property type="match status" value="1"/>
</dbReference>
<dbReference type="PROSITE" id="PS00039">
    <property type="entry name" value="DEAD_ATP_HELICASE"/>
    <property type="match status" value="1"/>
</dbReference>
<dbReference type="PROSITE" id="PS51192">
    <property type="entry name" value="HELICASE_ATP_BIND_1"/>
    <property type="match status" value="1"/>
</dbReference>
<dbReference type="PROSITE" id="PS51194">
    <property type="entry name" value="HELICASE_CTER"/>
    <property type="match status" value="1"/>
</dbReference>
<dbReference type="PROSITE" id="PS51195">
    <property type="entry name" value="Q_MOTIF"/>
    <property type="match status" value="1"/>
</dbReference>
<proteinExistence type="inferred from homology"/>
<protein>
    <recommendedName>
        <fullName evidence="1">ATP-dependent RNA helicase RhlB</fullName>
        <ecNumber evidence="1">3.6.4.13</ecNumber>
    </recommendedName>
</protein>
<name>RHLB_ECOL5</name>
<keyword id="KW-0067">ATP-binding</keyword>
<keyword id="KW-0963">Cytoplasm</keyword>
<keyword id="KW-0347">Helicase</keyword>
<keyword id="KW-0378">Hydrolase</keyword>
<keyword id="KW-0547">Nucleotide-binding</keyword>
<keyword id="KW-0694">RNA-binding</keyword>
<accession>Q0TAU3</accession>
<gene>
    <name evidence="1" type="primary">rhlB</name>
    <name type="ordered locus">ECP_3972</name>
</gene>